<organismHost>
    <name type="scientific">Anas</name>
    <name type="common">ducks</name>
    <dbReference type="NCBI Taxonomy" id="8835"/>
</organismHost>
<sequence length="305" mass="34867">MWNLRITPLSFGAACQGIFTSTLLLSALTVPLVCTIVYDSCLYMDINASRALANVYDLPDDFFPKIDDLVRDAKDALEPYWKSDSIKKHVLIATHFVDLIEDFWQTTQGMHEIAESLRAVIPPTTAPVPTGYLIQHEEAEEIPLGDLFKHQEERIVSFQPDYPITARIHAHLKAYAKINEESLDRARRLLWWHYNCLLWGEANVTNYISRLRTWLSTPEKYRGRDAPTIEAITRPIQVAQGGRKTSSGTRKPRGLEPRRRKVKTTVVYGRRRSKSRDRRAPSPQRAGSPLPRSSSSHHRSPSPRK</sequence>
<name>HBEAG_HPBDB</name>
<protein>
    <recommendedName>
        <fullName>External core antigen</fullName>
    </recommendedName>
    <alternativeName>
        <fullName>HBeAg</fullName>
    </alternativeName>
    <alternativeName>
        <fullName>Precore protein</fullName>
    </alternativeName>
</protein>
<keyword id="KW-0024">Alternative initiation</keyword>
<keyword id="KW-0945">Host-virus interaction</keyword>
<keyword id="KW-0964">Secreted</keyword>
<keyword id="KW-0732">Signal</keyword>
<keyword id="KW-0899">Viral immunoevasion</keyword>
<comment type="function">
    <text evidence="1">May regulate immune response to the intracellular capsid in acting as a T-cell tolerogen, by having an immunoregulatory effect which prevents destruction of infected cells by cytotoxic T-cells.</text>
</comment>
<comment type="subunit">
    <text evidence="1">Homodimerizes.</text>
</comment>
<comment type="subcellular location">
    <subcellularLocation>
        <location evidence="1">Secreted</location>
    </subcellularLocation>
</comment>
<comment type="alternative products">
    <event type="alternative initiation"/>
    <isoform>
        <id>P17190-1</id>
        <name>External core antigen</name>
        <sequence type="displayed"/>
    </isoform>
    <isoform>
        <id>P0C6K3-1</id>
        <name>Capsid protein</name>
        <sequence type="external"/>
    </isoform>
</comment>
<comment type="similarity">
    <text evidence="4">Belongs to the avihepadnavirus precore antigen family.</text>
</comment>
<comment type="sequence caution" evidence="4">
    <conflict type="erroneous initiation">
        <sequence resource="EMBL-CDS" id="AAA45753"/>
    </conflict>
</comment>
<feature type="signal peptide" evidence="2">
    <location>
        <begin position="1"/>
        <end position="19"/>
    </location>
</feature>
<feature type="chain" id="PRO_0000222304" description="External core antigen">
    <location>
        <begin position="20"/>
        <end position="272"/>
    </location>
</feature>
<feature type="propeptide" id="PRO_0000324683" evidence="1">
    <location>
        <begin position="273"/>
        <end position="305"/>
    </location>
</feature>
<feature type="region of interest" description="Disordered" evidence="3">
    <location>
        <begin position="226"/>
        <end position="305"/>
    </location>
</feature>
<feature type="compositionally biased region" description="Basic residues" evidence="3">
    <location>
        <begin position="258"/>
        <end position="277"/>
    </location>
</feature>
<feature type="compositionally biased region" description="Basic residues" evidence="3">
    <location>
        <begin position="295"/>
        <end position="305"/>
    </location>
</feature>
<feature type="site" description="Cleavage; by host" evidence="1">
    <location>
        <begin position="272"/>
        <end position="273"/>
    </location>
</feature>
<dbReference type="EMBL" id="M32990">
    <property type="protein sequence ID" value="AAA45753.1"/>
    <property type="status" value="ALT_INIT"/>
    <property type="molecule type" value="Genomic_DNA"/>
</dbReference>
<dbReference type="PIR" id="E33746">
    <property type="entry name" value="NKVLBD"/>
</dbReference>
<dbReference type="SMR" id="P17190"/>
<dbReference type="Proteomes" id="UP000008682">
    <property type="component" value="Genome"/>
</dbReference>
<dbReference type="GO" id="GO:0005576">
    <property type="term" value="C:extracellular region"/>
    <property type="evidence" value="ECO:0007669"/>
    <property type="project" value="UniProtKB-SubCell"/>
</dbReference>
<dbReference type="GO" id="GO:0005198">
    <property type="term" value="F:structural molecule activity"/>
    <property type="evidence" value="ECO:0007669"/>
    <property type="project" value="InterPro"/>
</dbReference>
<dbReference type="Gene3D" id="1.10.4090.10">
    <property type="entry name" value="Viral capsid, core domain supefamily, Hepatitis B virus"/>
    <property type="match status" value="2"/>
</dbReference>
<dbReference type="InterPro" id="IPR002006">
    <property type="entry name" value="Hepatitis_core"/>
</dbReference>
<dbReference type="InterPro" id="IPR036459">
    <property type="entry name" value="Viral_capsid_core_dom_sf_HBV"/>
</dbReference>
<dbReference type="Pfam" id="PF00906">
    <property type="entry name" value="Hepatitis_core"/>
    <property type="match status" value="1"/>
</dbReference>
<dbReference type="SUPFAM" id="SSF47852">
    <property type="entry name" value="Hepatitis B viral capsid (hbcag)"/>
    <property type="match status" value="1"/>
</dbReference>
<accession>P17190</accession>
<reference key="1">
    <citation type="journal article" date="1989" name="Virology">
        <title>Molecular cloning and sequence analysis of duck hepatitis B virus genomes of a new variant isolated from Shanghai ducks.</title>
        <authorList>
            <person name="Uchida M."/>
            <person name="Esumi M."/>
            <person name="Shikata T."/>
        </authorList>
    </citation>
    <scope>NUCLEOTIDE SEQUENCE [GENOMIC DNA]</scope>
</reference>
<proteinExistence type="inferred from homology"/>
<gene>
    <name type="primary">C</name>
</gene>
<organism>
    <name type="scientific">Duck hepatitis B virus (isolate brown Shanghai duck S5)</name>
    <name type="common">DHBV</name>
    <dbReference type="NCBI Taxonomy" id="10439"/>
    <lineage>
        <taxon>Viruses</taxon>
        <taxon>Riboviria</taxon>
        <taxon>Pararnavirae</taxon>
        <taxon>Artverviricota</taxon>
        <taxon>Revtraviricetes</taxon>
        <taxon>Blubervirales</taxon>
        <taxon>Hepadnaviridae</taxon>
        <taxon>Avihepadnavirus</taxon>
        <taxon>Duck hepatitis B virus</taxon>
    </lineage>
</organism>
<evidence type="ECO:0000250" key="1"/>
<evidence type="ECO:0000255" key="2"/>
<evidence type="ECO:0000256" key="3">
    <source>
        <dbReference type="SAM" id="MobiDB-lite"/>
    </source>
</evidence>
<evidence type="ECO:0000305" key="4"/>